<dbReference type="EC" id="4.1.1.65" evidence="1"/>
<dbReference type="EMBL" id="FO080185">
    <property type="protein sequence ID" value="CCD61819.1"/>
    <property type="molecule type" value="Genomic_DNA"/>
</dbReference>
<dbReference type="EMBL" id="FO080185">
    <property type="protein sequence ID" value="CCD61820.1"/>
    <property type="molecule type" value="Genomic_DNA"/>
</dbReference>
<dbReference type="PIR" id="A88504">
    <property type="entry name" value="A88504"/>
</dbReference>
<dbReference type="RefSeq" id="NP_001021127.1">
    <molecule id="Q10949-2"/>
    <property type="nucleotide sequence ID" value="NM_001025956.6"/>
</dbReference>
<dbReference type="RefSeq" id="NP_001021128.1">
    <molecule id="Q10949-1"/>
    <property type="nucleotide sequence ID" value="NM_001025957.6"/>
</dbReference>
<dbReference type="SMR" id="Q10949"/>
<dbReference type="BioGRID" id="41238">
    <property type="interactions" value="1"/>
</dbReference>
<dbReference type="FunCoup" id="Q10949">
    <property type="interactions" value="2674"/>
</dbReference>
<dbReference type="STRING" id="6239.B0361.5b.1"/>
<dbReference type="PaxDb" id="6239-B0361.5b"/>
<dbReference type="PeptideAtlas" id="Q10949"/>
<dbReference type="EnsemblMetazoa" id="B0361.5a.1">
    <molecule id="Q10949-2"/>
    <property type="protein sequence ID" value="B0361.5a.1"/>
    <property type="gene ID" value="WBGene00015159"/>
</dbReference>
<dbReference type="EnsemblMetazoa" id="B0361.5b.1">
    <molecule id="Q10949-1"/>
    <property type="protein sequence ID" value="B0361.5b.1"/>
    <property type="gene ID" value="WBGene00015159"/>
</dbReference>
<dbReference type="GeneID" id="176027"/>
<dbReference type="KEGG" id="cel:CELE_B0361.5"/>
<dbReference type="UCSC" id="B0361.5b">
    <molecule id="Q10949-1"/>
    <property type="organism name" value="c. elegans"/>
</dbReference>
<dbReference type="AGR" id="WB:WBGene00015159"/>
<dbReference type="CTD" id="176027"/>
<dbReference type="WormBase" id="B0361.5a">
    <molecule id="Q10949-2"/>
    <property type="protein sequence ID" value="CE37696"/>
    <property type="gene ID" value="WBGene00015159"/>
    <property type="gene designation" value="psd-1"/>
</dbReference>
<dbReference type="WormBase" id="B0361.5b">
    <molecule id="Q10949-1"/>
    <property type="protein sequence ID" value="CE37076"/>
    <property type="gene ID" value="WBGene00015159"/>
    <property type="gene designation" value="psd-1"/>
</dbReference>
<dbReference type="eggNOG" id="KOG2420">
    <property type="taxonomic scope" value="Eukaryota"/>
</dbReference>
<dbReference type="GeneTree" id="ENSGT00390000013484"/>
<dbReference type="InParanoid" id="Q10949"/>
<dbReference type="OMA" id="RWVANQC"/>
<dbReference type="OrthoDB" id="4330at2759"/>
<dbReference type="PhylomeDB" id="Q10949"/>
<dbReference type="UniPathway" id="UPA00558">
    <property type="reaction ID" value="UER00616"/>
</dbReference>
<dbReference type="PRO" id="PR:Q10949"/>
<dbReference type="Proteomes" id="UP000001940">
    <property type="component" value="Chromosome III"/>
</dbReference>
<dbReference type="Bgee" id="WBGene00015159">
    <property type="expression patterns" value="Expressed in larva and 4 other cell types or tissues"/>
</dbReference>
<dbReference type="GO" id="GO:0005811">
    <property type="term" value="C:lipid droplet"/>
    <property type="evidence" value="ECO:0000250"/>
    <property type="project" value="UniProtKB"/>
</dbReference>
<dbReference type="GO" id="GO:0005743">
    <property type="term" value="C:mitochondrial inner membrane"/>
    <property type="evidence" value="ECO:0007669"/>
    <property type="project" value="UniProtKB-SubCell"/>
</dbReference>
<dbReference type="GO" id="GO:0005739">
    <property type="term" value="C:mitochondrion"/>
    <property type="evidence" value="ECO:0000250"/>
    <property type="project" value="UniProtKB"/>
</dbReference>
<dbReference type="GO" id="GO:0004609">
    <property type="term" value="F:phosphatidylserine decarboxylase activity"/>
    <property type="evidence" value="ECO:0000318"/>
    <property type="project" value="GO_Central"/>
</dbReference>
<dbReference type="GO" id="GO:0140042">
    <property type="term" value="P:lipid droplet formation"/>
    <property type="evidence" value="ECO:0000250"/>
    <property type="project" value="UniProtKB"/>
</dbReference>
<dbReference type="GO" id="GO:0006646">
    <property type="term" value="P:phosphatidylethanolamine biosynthetic process"/>
    <property type="evidence" value="ECO:0000318"/>
    <property type="project" value="GO_Central"/>
</dbReference>
<dbReference type="GO" id="GO:0016540">
    <property type="term" value="P:protein autoprocessing"/>
    <property type="evidence" value="ECO:0007669"/>
    <property type="project" value="UniProtKB-UniRule"/>
</dbReference>
<dbReference type="HAMAP" id="MF_03208">
    <property type="entry name" value="PS_decarb_PSD_B_type1_euk"/>
    <property type="match status" value="1"/>
</dbReference>
<dbReference type="InterPro" id="IPR003817">
    <property type="entry name" value="PS_Dcarbxylase"/>
</dbReference>
<dbReference type="InterPro" id="IPR033177">
    <property type="entry name" value="PSD-B"/>
</dbReference>
<dbReference type="InterPro" id="IPR033661">
    <property type="entry name" value="PSD_type1_euk"/>
</dbReference>
<dbReference type="NCBIfam" id="TIGR00163">
    <property type="entry name" value="PS_decarb"/>
    <property type="match status" value="1"/>
</dbReference>
<dbReference type="PANTHER" id="PTHR10067">
    <property type="entry name" value="PHOSPHATIDYLSERINE DECARBOXYLASE"/>
    <property type="match status" value="1"/>
</dbReference>
<dbReference type="PANTHER" id="PTHR10067:SF6">
    <property type="entry name" value="PHOSPHATIDYLSERINE DECARBOXYLASE PROENZYME, MITOCHONDRIAL"/>
    <property type="match status" value="1"/>
</dbReference>
<dbReference type="Pfam" id="PF02666">
    <property type="entry name" value="PS_Dcarbxylase"/>
    <property type="match status" value="1"/>
</dbReference>
<evidence type="ECO:0000255" key="1">
    <source>
        <dbReference type="HAMAP-Rule" id="MF_03208"/>
    </source>
</evidence>
<evidence type="ECO:0000305" key="2"/>
<organism>
    <name type="scientific">Caenorhabditis elegans</name>
    <dbReference type="NCBI Taxonomy" id="6239"/>
    <lineage>
        <taxon>Eukaryota</taxon>
        <taxon>Metazoa</taxon>
        <taxon>Ecdysozoa</taxon>
        <taxon>Nematoda</taxon>
        <taxon>Chromadorea</taxon>
        <taxon>Rhabditida</taxon>
        <taxon>Rhabditina</taxon>
        <taxon>Rhabditomorpha</taxon>
        <taxon>Rhabditoidea</taxon>
        <taxon>Rhabditidae</taxon>
        <taxon>Peloderinae</taxon>
        <taxon>Caenorhabditis</taxon>
    </lineage>
</organism>
<accession>Q10949</accession>
<accession>Q6AHR5</accession>
<protein>
    <recommendedName>
        <fullName evidence="1">Phosphatidylserine decarboxylase proenzyme, mitochondrial</fullName>
        <ecNumber evidence="1">4.1.1.65</ecNumber>
    </recommendedName>
    <component>
        <recommendedName>
            <fullName evidence="1">Phosphatidylserine decarboxylase beta chain</fullName>
        </recommendedName>
    </component>
    <component>
        <recommendedName>
            <fullName evidence="1">Phosphatidylserine decarboxylase alpha chain</fullName>
        </recommendedName>
    </component>
</protein>
<feature type="transit peptide" description="Mitochondrion" evidence="1">
    <location>
        <begin position="1"/>
        <end position="34"/>
    </location>
</feature>
<feature type="chain" id="PRO_0000435637" description="Phosphatidylserine decarboxylase proenzyme, mitochondrial">
    <location>
        <begin position="35"/>
        <end position="377"/>
    </location>
</feature>
<feature type="chain" id="PRO_0000029841" description="Phosphatidylserine decarboxylase beta chain" evidence="1">
    <location>
        <begin position="35"/>
        <end position="343"/>
    </location>
</feature>
<feature type="chain" id="PRO_0000029842" description="Phosphatidylserine decarboxylase alpha chain" evidence="1">
    <location>
        <begin position="344"/>
        <end position="377"/>
    </location>
</feature>
<feature type="topological domain" description="Mitochondrial matrix" evidence="1">
    <location>
        <begin position="35"/>
        <end position="61"/>
    </location>
</feature>
<feature type="transmembrane region" description="Helical" evidence="1">
    <location>
        <begin position="62"/>
        <end position="80"/>
    </location>
</feature>
<feature type="topological domain" description="Mitochondrial intermembrane" evidence="1">
    <location>
        <begin position="81"/>
        <end position="377"/>
    </location>
</feature>
<feature type="active site" description="Charge relay system; for autoendoproteolytic cleavage activity" evidence="1">
    <location>
        <position position="181"/>
    </location>
</feature>
<feature type="active site" description="Charge relay system; for autoendoproteolytic cleavage activity" evidence="1">
    <location>
        <position position="238"/>
    </location>
</feature>
<feature type="active site" description="Charge relay system; for autoendoproteolytic cleavage activity" evidence="1">
    <location>
        <position position="344"/>
    </location>
</feature>
<feature type="active site" description="Schiff-base intermediate with substrate; via pyruvic acid; for decarboxylase activity" evidence="1">
    <location>
        <position position="344"/>
    </location>
</feature>
<feature type="site" description="Cleavage (non-hydrolytic); by autocatalysis" evidence="1">
    <location>
        <begin position="343"/>
        <end position="344"/>
    </location>
</feature>
<feature type="modified residue" description="Pyruvic acid (Ser); by autocatalysis" evidence="1">
    <location>
        <position position="344"/>
    </location>
</feature>
<feature type="splice variant" id="VSP_013776" description="In isoform a." evidence="2">
    <location>
        <begin position="2"/>
        <end position="30"/>
    </location>
</feature>
<feature type="splice variant" id="VSP_013777" description="In isoform a." evidence="2">
    <original>VRELTNQSKNVYATKEVIIGASQKKKR</original>
    <variation>LDIYSGGFLHPDSLMALNPFLIFVAFW</variation>
    <location>
        <begin position="31"/>
        <end position="57"/>
    </location>
</feature>
<gene>
    <name evidence="1" type="primary">psd-1</name>
    <name type="ORF">B0361.5</name>
</gene>
<sequence length="377" mass="42487">MMPLFNVLRSARMLPAVSKKVVSPPMMLRSVRELTNQSKNVYATKEVIIGASQKKKRSWVKWLSVSTLIIGGASYVGYLFTPDWREIVDSKHYYSNWKIRVYLSLPFNTASRVIGGLANQEIPVWLREHLLGGFARMYDCRMDDCVDPDFKNYPSFAAFFNRKLKESTRPISASPLVSPADGTVLHFGKVEDNKIEYVKGHDYDVDKFLGDVDLPQKDELDLYQVVIYLAPGDYHAFHSPARWVANQCRHVPGLLLSVRPTLLSHVPHLFCLNERVVLNGSWRHGFFSMSAVAATNVGDIVVDAEPSLRTNIVRRKTQKIMNTETEIHAPYVSGERVGEFRLGSTIVLVFQAPPTIKFAIKAGDPLRYGQSLVADGV</sequence>
<reference key="1">
    <citation type="journal article" date="1998" name="Science">
        <title>Genome sequence of the nematode C. elegans: a platform for investigating biology.</title>
        <authorList>
            <consortium name="The C. elegans sequencing consortium"/>
        </authorList>
    </citation>
    <scope>NUCLEOTIDE SEQUENCE [LARGE SCALE GENOMIC DNA]</scope>
    <scope>ALTERNATIVE SPLICING</scope>
    <source>
        <strain>Bristol N2</strain>
    </source>
</reference>
<keyword id="KW-0025">Alternative splicing</keyword>
<keyword id="KW-0210">Decarboxylase</keyword>
<keyword id="KW-0444">Lipid biosynthesis</keyword>
<keyword id="KW-0443">Lipid metabolism</keyword>
<keyword id="KW-0456">Lyase</keyword>
<keyword id="KW-0472">Membrane</keyword>
<keyword id="KW-0496">Mitochondrion</keyword>
<keyword id="KW-0999">Mitochondrion inner membrane</keyword>
<keyword id="KW-0594">Phospholipid biosynthesis</keyword>
<keyword id="KW-1208">Phospholipid metabolism</keyword>
<keyword id="KW-0670">Pyruvate</keyword>
<keyword id="KW-1185">Reference proteome</keyword>
<keyword id="KW-0809">Transit peptide</keyword>
<keyword id="KW-0812">Transmembrane</keyword>
<keyword id="KW-1133">Transmembrane helix</keyword>
<keyword id="KW-0865">Zymogen</keyword>
<comment type="function">
    <text evidence="1">Catalyzes the formation of phosphatidylethanolamine (PtdEtn) from phosphatidylserine (PtdSer). Plays a central role in phospholipid metabolism and in the interorganelle trafficking of phosphatidylserine.</text>
</comment>
<comment type="catalytic activity">
    <reaction evidence="1">
        <text>a 1,2-diacyl-sn-glycero-3-phospho-L-serine + H(+) = a 1,2-diacyl-sn-glycero-3-phosphoethanolamine + CO2</text>
        <dbReference type="Rhea" id="RHEA:20828"/>
        <dbReference type="ChEBI" id="CHEBI:15378"/>
        <dbReference type="ChEBI" id="CHEBI:16526"/>
        <dbReference type="ChEBI" id="CHEBI:57262"/>
        <dbReference type="ChEBI" id="CHEBI:64612"/>
        <dbReference type="EC" id="4.1.1.65"/>
    </reaction>
</comment>
<comment type="cofactor">
    <cofactor evidence="1">
        <name>pyruvate</name>
        <dbReference type="ChEBI" id="CHEBI:15361"/>
    </cofactor>
    <text evidence="1">Binds 1 pyruvoyl group covalently per subunit.</text>
</comment>
<comment type="pathway">
    <text evidence="1">Phospholipid metabolism; phosphatidylethanolamine biosynthesis; phosphatidylethanolamine from CDP-diacylglycerol: step 2/2.</text>
</comment>
<comment type="subunit">
    <text evidence="1">Heterodimer of a large membrane-associated beta subunit and a small pyruvoyl-containing alpha subunit.</text>
</comment>
<comment type="subcellular location">
    <molecule>Phosphatidylserine decarboxylase beta chain</molecule>
    <subcellularLocation>
        <location evidence="1">Mitochondrion inner membrane</location>
        <topology evidence="1">Single-pass membrane protein</topology>
        <orientation evidence="1">Intermembrane side</orientation>
    </subcellularLocation>
</comment>
<comment type="subcellular location">
    <molecule>Phosphatidylserine decarboxylase alpha chain</molecule>
    <subcellularLocation>
        <location evidence="1">Mitochondrion inner membrane</location>
        <topology evidence="1">Peripheral membrane protein</topology>
        <orientation evidence="1">Intermembrane side</orientation>
    </subcellularLocation>
    <text evidence="1">Anchored to the mitochondrial inner membrane through its interaction with the integral membrane beta chain.</text>
</comment>
<comment type="alternative products">
    <event type="alternative splicing"/>
    <isoform>
        <id>Q10949-1</id>
        <name>b</name>
        <sequence type="displayed"/>
    </isoform>
    <isoform>
        <id>Q10949-2</id>
        <name>a</name>
        <sequence type="described" ref="VSP_013776 VSP_013777"/>
    </isoform>
</comment>
<comment type="PTM">
    <text evidence="1">Is synthesized initially as an inactive proenzyme. Formation of the active enzyme involves a self-maturation process in which the active site pyruvoyl group is generated from an internal serine residue via an autocatalytic post-translational modification. Two non-identical subunits are generated from the proenzyme in this reaction, and the pyruvate is formed at the N-terminus of the alpha chain, which is derived from the carboxyl end of the proenzyme. The autoendoproteolytic cleavage occurs by a canonical serine protease mechanism, in which the side chain hydroxyl group of the serine supplies its oxygen atom to form the C-terminus of the beta chain, while the remainder of the serine residue undergoes an oxidative deamination to produce ammonia and the pyruvoyl prosthetic group on the alpha chain. During this reaction, the Ser that is part of the protease active site of the proenzyme becomes the pyruvoyl prosthetic group, which constitutes an essential element of the active site of the mature decarboxylase.</text>
</comment>
<comment type="similarity">
    <text evidence="1">Belongs to the phosphatidylserine decarboxylase family. PSD-B subfamily. Eukaryotic type I sub-subfamily.</text>
</comment>
<name>PISD_CAEEL</name>
<proteinExistence type="inferred from homology"/>